<reference key="1">
    <citation type="journal article" date="2012" name="Stand. Genomic Sci.">
        <title>Complete genome sequence of Polynucleobacter necessarius subsp. asymbioticus type strain (QLW-P1DMWA-1(T)).</title>
        <authorList>
            <person name="Meincke L."/>
            <person name="Copeland A."/>
            <person name="Lapidus A."/>
            <person name="Lucas S."/>
            <person name="Berry K.W."/>
            <person name="Del Rio T.G."/>
            <person name="Hammon N."/>
            <person name="Dalin E."/>
            <person name="Tice H."/>
            <person name="Pitluck S."/>
            <person name="Richardson P."/>
            <person name="Bruce D."/>
            <person name="Goodwin L."/>
            <person name="Han C."/>
            <person name="Tapia R."/>
            <person name="Detter J.C."/>
            <person name="Schmutz J."/>
            <person name="Brettin T."/>
            <person name="Larimer F."/>
            <person name="Land M."/>
            <person name="Hauser L."/>
            <person name="Kyrpides N.C."/>
            <person name="Ivanova N."/>
            <person name="Goker M."/>
            <person name="Woyke T."/>
            <person name="Wu Q.L."/>
            <person name="Pockl M."/>
            <person name="Hahn M.W."/>
            <person name="Klenk H.P."/>
        </authorList>
    </citation>
    <scope>NUCLEOTIDE SEQUENCE [LARGE SCALE GENOMIC DNA]</scope>
    <source>
        <strain>DSM 18221 / CIP 109841 / QLW-P1DMWA-1</strain>
    </source>
</reference>
<evidence type="ECO:0000255" key="1">
    <source>
        <dbReference type="HAMAP-Rule" id="MF_00211"/>
    </source>
</evidence>
<feature type="chain" id="PRO_1000078022" description="Anthranilate phosphoribosyltransferase">
    <location>
        <begin position="1"/>
        <end position="341"/>
    </location>
</feature>
<feature type="binding site" evidence="1">
    <location>
        <position position="84"/>
    </location>
    <ligand>
        <name>5-phospho-alpha-D-ribose 1-diphosphate</name>
        <dbReference type="ChEBI" id="CHEBI:58017"/>
    </ligand>
</feature>
<feature type="binding site" evidence="1">
    <location>
        <position position="84"/>
    </location>
    <ligand>
        <name>anthranilate</name>
        <dbReference type="ChEBI" id="CHEBI:16567"/>
        <label>1</label>
    </ligand>
</feature>
<feature type="binding site" evidence="1">
    <location>
        <begin position="87"/>
        <end position="88"/>
    </location>
    <ligand>
        <name>5-phospho-alpha-D-ribose 1-diphosphate</name>
        <dbReference type="ChEBI" id="CHEBI:58017"/>
    </ligand>
</feature>
<feature type="binding site" evidence="1">
    <location>
        <position position="92"/>
    </location>
    <ligand>
        <name>5-phospho-alpha-D-ribose 1-diphosphate</name>
        <dbReference type="ChEBI" id="CHEBI:58017"/>
    </ligand>
</feature>
<feature type="binding site" evidence="1">
    <location>
        <begin position="94"/>
        <end position="97"/>
    </location>
    <ligand>
        <name>5-phospho-alpha-D-ribose 1-diphosphate</name>
        <dbReference type="ChEBI" id="CHEBI:58017"/>
    </ligand>
</feature>
<feature type="binding site" evidence="1">
    <location>
        <position position="96"/>
    </location>
    <ligand>
        <name>Mg(2+)</name>
        <dbReference type="ChEBI" id="CHEBI:18420"/>
        <label>1</label>
    </ligand>
</feature>
<feature type="binding site" evidence="1">
    <location>
        <begin position="112"/>
        <end position="120"/>
    </location>
    <ligand>
        <name>5-phospho-alpha-D-ribose 1-diphosphate</name>
        <dbReference type="ChEBI" id="CHEBI:58017"/>
    </ligand>
</feature>
<feature type="binding site" evidence="1">
    <location>
        <position position="115"/>
    </location>
    <ligand>
        <name>anthranilate</name>
        <dbReference type="ChEBI" id="CHEBI:16567"/>
        <label>1</label>
    </ligand>
</feature>
<feature type="binding site" evidence="1">
    <location>
        <position position="124"/>
    </location>
    <ligand>
        <name>5-phospho-alpha-D-ribose 1-diphosphate</name>
        <dbReference type="ChEBI" id="CHEBI:58017"/>
    </ligand>
</feature>
<feature type="binding site" evidence="1">
    <location>
        <position position="170"/>
    </location>
    <ligand>
        <name>anthranilate</name>
        <dbReference type="ChEBI" id="CHEBI:16567"/>
        <label>2</label>
    </ligand>
</feature>
<feature type="binding site" evidence="1">
    <location>
        <position position="229"/>
    </location>
    <ligand>
        <name>Mg(2+)</name>
        <dbReference type="ChEBI" id="CHEBI:18420"/>
        <label>2</label>
    </ligand>
</feature>
<feature type="binding site" evidence="1">
    <location>
        <position position="230"/>
    </location>
    <ligand>
        <name>Mg(2+)</name>
        <dbReference type="ChEBI" id="CHEBI:18420"/>
        <label>1</label>
    </ligand>
</feature>
<feature type="binding site" evidence="1">
    <location>
        <position position="230"/>
    </location>
    <ligand>
        <name>Mg(2+)</name>
        <dbReference type="ChEBI" id="CHEBI:18420"/>
        <label>2</label>
    </ligand>
</feature>
<keyword id="KW-0028">Amino-acid biosynthesis</keyword>
<keyword id="KW-0057">Aromatic amino acid biosynthesis</keyword>
<keyword id="KW-0328">Glycosyltransferase</keyword>
<keyword id="KW-0460">Magnesium</keyword>
<keyword id="KW-0479">Metal-binding</keyword>
<keyword id="KW-1185">Reference proteome</keyword>
<keyword id="KW-0808">Transferase</keyword>
<keyword id="KW-0822">Tryptophan biosynthesis</keyword>
<dbReference type="EC" id="2.4.2.18" evidence="1"/>
<dbReference type="EMBL" id="CP000655">
    <property type="protein sequence ID" value="ABP33367.1"/>
    <property type="molecule type" value="Genomic_DNA"/>
</dbReference>
<dbReference type="RefSeq" id="WP_011901992.1">
    <property type="nucleotide sequence ID" value="NC_009379.1"/>
</dbReference>
<dbReference type="SMR" id="A4SV53"/>
<dbReference type="GeneID" id="31480495"/>
<dbReference type="KEGG" id="pnu:Pnuc_0146"/>
<dbReference type="eggNOG" id="COG0547">
    <property type="taxonomic scope" value="Bacteria"/>
</dbReference>
<dbReference type="HOGENOM" id="CLU_034315_2_1_4"/>
<dbReference type="UniPathway" id="UPA00035">
    <property type="reaction ID" value="UER00041"/>
</dbReference>
<dbReference type="Proteomes" id="UP000000231">
    <property type="component" value="Chromosome"/>
</dbReference>
<dbReference type="GO" id="GO:0005829">
    <property type="term" value="C:cytosol"/>
    <property type="evidence" value="ECO:0007669"/>
    <property type="project" value="TreeGrafter"/>
</dbReference>
<dbReference type="GO" id="GO:0004048">
    <property type="term" value="F:anthranilate phosphoribosyltransferase activity"/>
    <property type="evidence" value="ECO:0007669"/>
    <property type="project" value="UniProtKB-UniRule"/>
</dbReference>
<dbReference type="GO" id="GO:0000287">
    <property type="term" value="F:magnesium ion binding"/>
    <property type="evidence" value="ECO:0007669"/>
    <property type="project" value="UniProtKB-UniRule"/>
</dbReference>
<dbReference type="GO" id="GO:0000162">
    <property type="term" value="P:L-tryptophan biosynthetic process"/>
    <property type="evidence" value="ECO:0007669"/>
    <property type="project" value="UniProtKB-UniRule"/>
</dbReference>
<dbReference type="FunFam" id="1.20.970.10:FF:000006">
    <property type="entry name" value="Anthranilate phosphoribosyltransferase"/>
    <property type="match status" value="1"/>
</dbReference>
<dbReference type="FunFam" id="3.40.1030.10:FF:000002">
    <property type="entry name" value="Anthranilate phosphoribosyltransferase"/>
    <property type="match status" value="1"/>
</dbReference>
<dbReference type="Gene3D" id="3.40.1030.10">
    <property type="entry name" value="Nucleoside phosphorylase/phosphoribosyltransferase catalytic domain"/>
    <property type="match status" value="1"/>
</dbReference>
<dbReference type="Gene3D" id="1.20.970.10">
    <property type="entry name" value="Transferase, Pyrimidine Nucleoside Phosphorylase, Chain C"/>
    <property type="match status" value="1"/>
</dbReference>
<dbReference type="HAMAP" id="MF_00211">
    <property type="entry name" value="TrpD"/>
    <property type="match status" value="1"/>
</dbReference>
<dbReference type="InterPro" id="IPR005940">
    <property type="entry name" value="Anthranilate_Pribosyl_Tfrase"/>
</dbReference>
<dbReference type="InterPro" id="IPR000312">
    <property type="entry name" value="Glycosyl_Trfase_fam3"/>
</dbReference>
<dbReference type="InterPro" id="IPR017459">
    <property type="entry name" value="Glycosyl_Trfase_fam3_N_dom"/>
</dbReference>
<dbReference type="InterPro" id="IPR036320">
    <property type="entry name" value="Glycosyl_Trfase_fam3_N_dom_sf"/>
</dbReference>
<dbReference type="InterPro" id="IPR035902">
    <property type="entry name" value="Nuc_phospho_transferase"/>
</dbReference>
<dbReference type="NCBIfam" id="TIGR01245">
    <property type="entry name" value="trpD"/>
    <property type="match status" value="1"/>
</dbReference>
<dbReference type="PANTHER" id="PTHR43285">
    <property type="entry name" value="ANTHRANILATE PHOSPHORIBOSYLTRANSFERASE"/>
    <property type="match status" value="1"/>
</dbReference>
<dbReference type="PANTHER" id="PTHR43285:SF2">
    <property type="entry name" value="ANTHRANILATE PHOSPHORIBOSYLTRANSFERASE"/>
    <property type="match status" value="1"/>
</dbReference>
<dbReference type="Pfam" id="PF02885">
    <property type="entry name" value="Glycos_trans_3N"/>
    <property type="match status" value="1"/>
</dbReference>
<dbReference type="Pfam" id="PF00591">
    <property type="entry name" value="Glycos_transf_3"/>
    <property type="match status" value="1"/>
</dbReference>
<dbReference type="SUPFAM" id="SSF52418">
    <property type="entry name" value="Nucleoside phosphorylase/phosphoribosyltransferase catalytic domain"/>
    <property type="match status" value="1"/>
</dbReference>
<dbReference type="SUPFAM" id="SSF47648">
    <property type="entry name" value="Nucleoside phosphorylase/phosphoribosyltransferase N-terminal domain"/>
    <property type="match status" value="1"/>
</dbReference>
<name>TRPD_POLAQ</name>
<accession>A4SV53</accession>
<organism>
    <name type="scientific">Polynucleobacter asymbioticus (strain DSM 18221 / CIP 109841 / QLW-P1DMWA-1)</name>
    <name type="common">Polynucleobacter necessarius subsp. asymbioticus</name>
    <dbReference type="NCBI Taxonomy" id="312153"/>
    <lineage>
        <taxon>Bacteria</taxon>
        <taxon>Pseudomonadati</taxon>
        <taxon>Pseudomonadota</taxon>
        <taxon>Betaproteobacteria</taxon>
        <taxon>Burkholderiales</taxon>
        <taxon>Burkholderiaceae</taxon>
        <taxon>Polynucleobacter</taxon>
    </lineage>
</organism>
<proteinExistence type="inferred from homology"/>
<sequence length="341" mass="35845">MSITPQEALQRCIEHRELFHDEMTDMMRLIMSGEMAPELVAGLLVALRTKKETVGEIAAAAQVMREFATSVHIDDRSHLVDVVGTGGDGAHTFNISTAAMFVAAAAGAKIAKHGNRSVSSKSGSADVLEALGANLALSAEQVAKCISTVGAGFMFAPNHHPAMKNVVPIRKQLGVRTIFNILGPLTNPADAKRILMGVFHADLVGIQARVLQALGMEHALVVYGRDGLDEISLEGPTLVGELKDGVVREYEIHPKDFGLHTAPTNSFKVANAEESKRIVLDVIDNKPSAASDIVCLNAGATLYVAGIAPDIASGIAKAKAAIASGAARQKLDAFVAASQSN</sequence>
<gene>
    <name evidence="1" type="primary">trpD</name>
    <name type="ordered locus">Pnuc_0146</name>
</gene>
<comment type="function">
    <text evidence="1">Catalyzes the transfer of the phosphoribosyl group of 5-phosphorylribose-1-pyrophosphate (PRPP) to anthranilate to yield N-(5'-phosphoribosyl)-anthranilate (PRA).</text>
</comment>
<comment type="catalytic activity">
    <reaction evidence="1">
        <text>N-(5-phospho-beta-D-ribosyl)anthranilate + diphosphate = 5-phospho-alpha-D-ribose 1-diphosphate + anthranilate</text>
        <dbReference type="Rhea" id="RHEA:11768"/>
        <dbReference type="ChEBI" id="CHEBI:16567"/>
        <dbReference type="ChEBI" id="CHEBI:18277"/>
        <dbReference type="ChEBI" id="CHEBI:33019"/>
        <dbReference type="ChEBI" id="CHEBI:58017"/>
        <dbReference type="EC" id="2.4.2.18"/>
    </reaction>
</comment>
<comment type="cofactor">
    <cofactor evidence="1">
        <name>Mg(2+)</name>
        <dbReference type="ChEBI" id="CHEBI:18420"/>
    </cofactor>
    <text evidence="1">Binds 2 magnesium ions per monomer.</text>
</comment>
<comment type="pathway">
    <text evidence="1">Amino-acid biosynthesis; L-tryptophan biosynthesis; L-tryptophan from chorismate: step 2/5.</text>
</comment>
<comment type="subunit">
    <text evidence="1">Homodimer.</text>
</comment>
<comment type="similarity">
    <text evidence="1">Belongs to the anthranilate phosphoribosyltransferase family.</text>
</comment>
<protein>
    <recommendedName>
        <fullName evidence="1">Anthranilate phosphoribosyltransferase</fullName>
        <ecNumber evidence="1">2.4.2.18</ecNumber>
    </recommendedName>
</protein>